<protein>
    <recommendedName>
        <fullName evidence="1">Small ribosomal subunit protein uS17</fullName>
    </recommendedName>
    <alternativeName>
        <fullName evidence="2">30S ribosomal protein S17</fullName>
    </alternativeName>
</protein>
<comment type="function">
    <text evidence="1">One of the primary rRNA binding proteins, it binds specifically to the 5'-end of 16S ribosomal RNA.</text>
</comment>
<comment type="subunit">
    <text evidence="1">Part of the 30S ribosomal subunit.</text>
</comment>
<comment type="similarity">
    <text evidence="1">Belongs to the universal ribosomal protein uS17 family.</text>
</comment>
<gene>
    <name evidence="1" type="primary">rpsQ</name>
    <name evidence="1" type="synonym">rps17</name>
    <name type="ordered locus">MAE_57340</name>
</gene>
<dbReference type="EMBL" id="AP009552">
    <property type="protein sequence ID" value="BAG05556.1"/>
    <property type="molecule type" value="Genomic_DNA"/>
</dbReference>
<dbReference type="RefSeq" id="WP_002734070.1">
    <property type="nucleotide sequence ID" value="NC_010296.1"/>
</dbReference>
<dbReference type="SMR" id="B0JHZ4"/>
<dbReference type="STRING" id="449447.MAE_57340"/>
<dbReference type="PaxDb" id="449447-MAE_57340"/>
<dbReference type="EnsemblBacteria" id="BAG05556">
    <property type="protein sequence ID" value="BAG05556"/>
    <property type="gene ID" value="MAE_57340"/>
</dbReference>
<dbReference type="KEGG" id="mar:MAE_57340"/>
<dbReference type="eggNOG" id="COG0186">
    <property type="taxonomic scope" value="Bacteria"/>
</dbReference>
<dbReference type="HOGENOM" id="CLU_073626_1_2_3"/>
<dbReference type="BioCyc" id="MAER449447:MAE_RS24985-MONOMER"/>
<dbReference type="Proteomes" id="UP000001510">
    <property type="component" value="Chromosome"/>
</dbReference>
<dbReference type="GO" id="GO:0022627">
    <property type="term" value="C:cytosolic small ribosomal subunit"/>
    <property type="evidence" value="ECO:0007669"/>
    <property type="project" value="TreeGrafter"/>
</dbReference>
<dbReference type="GO" id="GO:0019843">
    <property type="term" value="F:rRNA binding"/>
    <property type="evidence" value="ECO:0007669"/>
    <property type="project" value="UniProtKB-UniRule"/>
</dbReference>
<dbReference type="GO" id="GO:0003735">
    <property type="term" value="F:structural constituent of ribosome"/>
    <property type="evidence" value="ECO:0007669"/>
    <property type="project" value="InterPro"/>
</dbReference>
<dbReference type="GO" id="GO:0006412">
    <property type="term" value="P:translation"/>
    <property type="evidence" value="ECO:0007669"/>
    <property type="project" value="UniProtKB-UniRule"/>
</dbReference>
<dbReference type="CDD" id="cd00364">
    <property type="entry name" value="Ribosomal_uS17"/>
    <property type="match status" value="1"/>
</dbReference>
<dbReference type="Gene3D" id="2.40.50.140">
    <property type="entry name" value="Nucleic acid-binding proteins"/>
    <property type="match status" value="1"/>
</dbReference>
<dbReference type="HAMAP" id="MF_01345_B">
    <property type="entry name" value="Ribosomal_uS17_B"/>
    <property type="match status" value="1"/>
</dbReference>
<dbReference type="InterPro" id="IPR012340">
    <property type="entry name" value="NA-bd_OB-fold"/>
</dbReference>
<dbReference type="InterPro" id="IPR000266">
    <property type="entry name" value="Ribosomal_uS17"/>
</dbReference>
<dbReference type="InterPro" id="IPR019984">
    <property type="entry name" value="Ribosomal_uS17_bact/chlr"/>
</dbReference>
<dbReference type="InterPro" id="IPR019979">
    <property type="entry name" value="Ribosomal_uS17_CS"/>
</dbReference>
<dbReference type="NCBIfam" id="NF004123">
    <property type="entry name" value="PRK05610.1"/>
    <property type="match status" value="1"/>
</dbReference>
<dbReference type="NCBIfam" id="TIGR03635">
    <property type="entry name" value="uS17_bact"/>
    <property type="match status" value="1"/>
</dbReference>
<dbReference type="PANTHER" id="PTHR10744">
    <property type="entry name" value="40S RIBOSOMAL PROTEIN S11 FAMILY MEMBER"/>
    <property type="match status" value="1"/>
</dbReference>
<dbReference type="PANTHER" id="PTHR10744:SF1">
    <property type="entry name" value="SMALL RIBOSOMAL SUBUNIT PROTEIN US17M"/>
    <property type="match status" value="1"/>
</dbReference>
<dbReference type="Pfam" id="PF00366">
    <property type="entry name" value="Ribosomal_S17"/>
    <property type="match status" value="1"/>
</dbReference>
<dbReference type="PRINTS" id="PR00973">
    <property type="entry name" value="RIBOSOMALS17"/>
</dbReference>
<dbReference type="SUPFAM" id="SSF50249">
    <property type="entry name" value="Nucleic acid-binding proteins"/>
    <property type="match status" value="1"/>
</dbReference>
<dbReference type="PROSITE" id="PS00056">
    <property type="entry name" value="RIBOSOMAL_S17"/>
    <property type="match status" value="1"/>
</dbReference>
<accession>B0JHZ4</accession>
<sequence length="80" mass="9129">MAVKERVGVVVSDKMDKTVVVAIENRSPHPKYGKIVVKTQKFKAHDAENQAKQGDRVRIRETRPLSKTKRWEVAEILTDS</sequence>
<name>RS17_MICAN</name>
<organism>
    <name type="scientific">Microcystis aeruginosa (strain NIES-843 / IAM M-2473)</name>
    <dbReference type="NCBI Taxonomy" id="449447"/>
    <lineage>
        <taxon>Bacteria</taxon>
        <taxon>Bacillati</taxon>
        <taxon>Cyanobacteriota</taxon>
        <taxon>Cyanophyceae</taxon>
        <taxon>Oscillatoriophycideae</taxon>
        <taxon>Chroococcales</taxon>
        <taxon>Microcystaceae</taxon>
        <taxon>Microcystis</taxon>
    </lineage>
</organism>
<evidence type="ECO:0000255" key="1">
    <source>
        <dbReference type="HAMAP-Rule" id="MF_01345"/>
    </source>
</evidence>
<evidence type="ECO:0000305" key="2"/>
<feature type="chain" id="PRO_1000086845" description="Small ribosomal subunit protein uS17">
    <location>
        <begin position="1"/>
        <end position="80"/>
    </location>
</feature>
<proteinExistence type="inferred from homology"/>
<keyword id="KW-0687">Ribonucleoprotein</keyword>
<keyword id="KW-0689">Ribosomal protein</keyword>
<keyword id="KW-0694">RNA-binding</keyword>
<keyword id="KW-0699">rRNA-binding</keyword>
<reference key="1">
    <citation type="journal article" date="2007" name="DNA Res.">
        <title>Complete genomic structure of the bloom-forming toxic cyanobacterium Microcystis aeruginosa NIES-843.</title>
        <authorList>
            <person name="Kaneko T."/>
            <person name="Nakajima N."/>
            <person name="Okamoto S."/>
            <person name="Suzuki I."/>
            <person name="Tanabe Y."/>
            <person name="Tamaoki M."/>
            <person name="Nakamura Y."/>
            <person name="Kasai F."/>
            <person name="Watanabe A."/>
            <person name="Kawashima K."/>
            <person name="Kishida Y."/>
            <person name="Ono A."/>
            <person name="Shimizu Y."/>
            <person name="Takahashi C."/>
            <person name="Minami C."/>
            <person name="Fujishiro T."/>
            <person name="Kohara M."/>
            <person name="Katoh M."/>
            <person name="Nakazaki N."/>
            <person name="Nakayama S."/>
            <person name="Yamada M."/>
            <person name="Tabata S."/>
            <person name="Watanabe M.M."/>
        </authorList>
    </citation>
    <scope>NUCLEOTIDE SEQUENCE [LARGE SCALE GENOMIC DNA]</scope>
    <source>
        <strain>NIES-843 / IAM M-247</strain>
    </source>
</reference>